<dbReference type="EMBL" id="AY958085">
    <property type="protein sequence ID" value="AAX45725.1"/>
    <property type="molecule type" value="Genomic_DNA"/>
</dbReference>
<dbReference type="RefSeq" id="YP_636399.1">
    <property type="nucleotide sequence ID" value="NC_008116.1"/>
</dbReference>
<dbReference type="SMR" id="Q32RX7"/>
<dbReference type="GeneID" id="4108684"/>
<dbReference type="GO" id="GO:0009535">
    <property type="term" value="C:chloroplast thylakoid membrane"/>
    <property type="evidence" value="ECO:0007669"/>
    <property type="project" value="UniProtKB-SubCell"/>
</dbReference>
<dbReference type="GO" id="GO:0009539">
    <property type="term" value="C:photosystem II reaction center"/>
    <property type="evidence" value="ECO:0007669"/>
    <property type="project" value="InterPro"/>
</dbReference>
<dbReference type="GO" id="GO:0009055">
    <property type="term" value="F:electron transfer activity"/>
    <property type="evidence" value="ECO:0007669"/>
    <property type="project" value="UniProtKB-UniRule"/>
</dbReference>
<dbReference type="GO" id="GO:0020037">
    <property type="term" value="F:heme binding"/>
    <property type="evidence" value="ECO:0007669"/>
    <property type="project" value="InterPro"/>
</dbReference>
<dbReference type="GO" id="GO:0005506">
    <property type="term" value="F:iron ion binding"/>
    <property type="evidence" value="ECO:0007669"/>
    <property type="project" value="UniProtKB-UniRule"/>
</dbReference>
<dbReference type="GO" id="GO:0009767">
    <property type="term" value="P:photosynthetic electron transport chain"/>
    <property type="evidence" value="ECO:0007669"/>
    <property type="project" value="InterPro"/>
</dbReference>
<dbReference type="Gene3D" id="1.20.5.860">
    <property type="entry name" value="Photosystem II cytochrome b559, alpha subunit"/>
    <property type="match status" value="1"/>
</dbReference>
<dbReference type="HAMAP" id="MF_00642">
    <property type="entry name" value="PSII_PsbE"/>
    <property type="match status" value="1"/>
</dbReference>
<dbReference type="InterPro" id="IPR006217">
    <property type="entry name" value="PSII_cyt_b559_asu"/>
</dbReference>
<dbReference type="InterPro" id="IPR037025">
    <property type="entry name" value="PSII_cyt_b559_asu_sf"/>
</dbReference>
<dbReference type="InterPro" id="IPR006216">
    <property type="entry name" value="PSII_cyt_b559_CS"/>
</dbReference>
<dbReference type="InterPro" id="IPR013081">
    <property type="entry name" value="PSII_cyt_b559_N"/>
</dbReference>
<dbReference type="InterPro" id="IPR013082">
    <property type="entry name" value="PSII_cytb559_asu_lum"/>
</dbReference>
<dbReference type="NCBIfam" id="TIGR01332">
    <property type="entry name" value="cyt_b559_alpha"/>
    <property type="match status" value="1"/>
</dbReference>
<dbReference type="PANTHER" id="PTHR33391">
    <property type="entry name" value="CYTOCHROME B559 SUBUNIT BETA-RELATED"/>
    <property type="match status" value="1"/>
</dbReference>
<dbReference type="PANTHER" id="PTHR33391:SF9">
    <property type="entry name" value="CYTOCHROME B559 SUBUNIT BETA-RELATED"/>
    <property type="match status" value="1"/>
</dbReference>
<dbReference type="Pfam" id="PF00283">
    <property type="entry name" value="Cytochrom_B559"/>
    <property type="match status" value="1"/>
</dbReference>
<dbReference type="Pfam" id="PF00284">
    <property type="entry name" value="Cytochrom_B559a"/>
    <property type="match status" value="1"/>
</dbReference>
<dbReference type="PIRSF" id="PIRSF000036">
    <property type="entry name" value="PsbE"/>
    <property type="match status" value="1"/>
</dbReference>
<dbReference type="SUPFAM" id="SSF161045">
    <property type="entry name" value="Cytochrome b559 subunits"/>
    <property type="match status" value="1"/>
</dbReference>
<dbReference type="PROSITE" id="PS00537">
    <property type="entry name" value="CYTOCHROME_B559"/>
    <property type="match status" value="1"/>
</dbReference>
<proteinExistence type="inferred from homology"/>
<keyword id="KW-0150">Chloroplast</keyword>
<keyword id="KW-0249">Electron transport</keyword>
<keyword id="KW-0349">Heme</keyword>
<keyword id="KW-0408">Iron</keyword>
<keyword id="KW-0472">Membrane</keyword>
<keyword id="KW-0479">Metal-binding</keyword>
<keyword id="KW-0602">Photosynthesis</keyword>
<keyword id="KW-0604">Photosystem II</keyword>
<keyword id="KW-0934">Plastid</keyword>
<keyword id="KW-0793">Thylakoid</keyword>
<keyword id="KW-0812">Transmembrane</keyword>
<keyword id="KW-1133">Transmembrane helix</keyword>
<keyword id="KW-0813">Transport</keyword>
<name>PSBE_STAPU</name>
<comment type="function">
    <text evidence="1">This b-type cytochrome is tightly associated with the reaction center of photosystem II (PSII). PSII is a light-driven water:plastoquinone oxidoreductase that uses light energy to abstract electrons from H(2)O, generating O(2) and a proton gradient subsequently used for ATP formation. It consists of a core antenna complex that captures photons, and an electron transfer chain that converts photonic excitation into a charge separation.</text>
</comment>
<comment type="cofactor">
    <cofactor evidence="1">
        <name>heme b</name>
        <dbReference type="ChEBI" id="CHEBI:60344"/>
    </cofactor>
    <text evidence="1">With its partner (PsbF) binds heme. PSII binds additional chlorophylls, carotenoids and specific lipids.</text>
</comment>
<comment type="subunit">
    <text evidence="1">Heterodimer of an alpha subunit and a beta subunit. PSII is composed of 1 copy each of membrane proteins PsbA, PsbB, PsbC, PsbD, PsbE, PsbF, PsbH, PsbI, PsbJ, PsbK, PsbL, PsbM, PsbT, PsbX, PsbY, PsbZ, Psb30/Ycf12, at least 3 peripheral proteins of the oxygen-evolving complex and a large number of cofactors. It forms dimeric complexes.</text>
</comment>
<comment type="subcellular location">
    <subcellularLocation>
        <location evidence="1">Plastid</location>
        <location evidence="1">Chloroplast thylakoid membrane</location>
        <topology evidence="1">Single-pass membrane protein</topology>
    </subcellularLocation>
</comment>
<comment type="similarity">
    <text evidence="1">Belongs to the PsbE/PsbF family.</text>
</comment>
<sequence length="83" mass="9433">MSGNTGERPFGDIITSIRYWVIHSITIPSLFIAGWLFVSTGLAYDVFGSPRPNEYFTESRQEVPLITGRFNSLDQLDEFTRSL</sequence>
<feature type="chain" id="PRO_0000233212" description="Cytochrome b559 subunit alpha">
    <location>
        <begin position="1"/>
        <end position="83"/>
    </location>
</feature>
<feature type="transmembrane region" description="Helical" evidence="1">
    <location>
        <begin position="21"/>
        <end position="35"/>
    </location>
</feature>
<feature type="binding site" description="axial binding residue" evidence="1">
    <location>
        <position position="23"/>
    </location>
    <ligand>
        <name>heme</name>
        <dbReference type="ChEBI" id="CHEBI:30413"/>
        <note>ligand shared with beta subunit</note>
    </ligand>
    <ligandPart>
        <name>Fe</name>
        <dbReference type="ChEBI" id="CHEBI:18248"/>
    </ligandPart>
</feature>
<protein>
    <recommendedName>
        <fullName evidence="1">Cytochrome b559 subunit alpha</fullName>
    </recommendedName>
    <alternativeName>
        <fullName evidence="1">PSII reaction center subunit V</fullName>
    </alternativeName>
</protein>
<organism>
    <name type="scientific">Staurastrum punctulatum</name>
    <name type="common">Green alga</name>
    <name type="synonym">Cosmoastrum punctulatum</name>
    <dbReference type="NCBI Taxonomy" id="102822"/>
    <lineage>
        <taxon>Eukaryota</taxon>
        <taxon>Viridiplantae</taxon>
        <taxon>Streptophyta</taxon>
        <taxon>Zygnematophyceae</taxon>
        <taxon>Zygnematophycidae</taxon>
        <taxon>Desmidiales</taxon>
        <taxon>Desmidiaceae</taxon>
        <taxon>Staurastrum</taxon>
    </lineage>
</organism>
<accession>Q32RX7</accession>
<geneLocation type="chloroplast"/>
<reference key="1">
    <citation type="journal article" date="2005" name="BMC Biol.">
        <title>The complete chloroplast DNA sequences of the charophycean green algae Staurastrum and Zygnema reveal that the chloroplast genome underwent extensive changes during the evolution of the Zygnematales.</title>
        <authorList>
            <person name="Turmel M."/>
            <person name="Otis C."/>
            <person name="Lemieux C."/>
        </authorList>
    </citation>
    <scope>NUCLEOTIDE SEQUENCE [LARGE SCALE GENOMIC DNA]</scope>
</reference>
<evidence type="ECO:0000255" key="1">
    <source>
        <dbReference type="HAMAP-Rule" id="MF_00642"/>
    </source>
</evidence>
<gene>
    <name evidence="1" type="primary">psbE</name>
</gene>